<comment type="function">
    <text evidence="1">Catalyzes the interconversion of 2-phosphoglycerate and 3-phosphoglycerate.</text>
</comment>
<comment type="catalytic activity">
    <reaction evidence="1">
        <text>(2R)-2-phosphoglycerate = (2R)-3-phosphoglycerate</text>
        <dbReference type="Rhea" id="RHEA:15901"/>
        <dbReference type="ChEBI" id="CHEBI:58272"/>
        <dbReference type="ChEBI" id="CHEBI:58289"/>
        <dbReference type="EC" id="5.4.2.11"/>
    </reaction>
</comment>
<comment type="pathway">
    <text evidence="1">Carbohydrate degradation; glycolysis; pyruvate from D-glyceraldehyde 3-phosphate: step 3/5.</text>
</comment>
<comment type="subunit">
    <text evidence="1">Homodimer.</text>
</comment>
<comment type="similarity">
    <text evidence="1">Belongs to the phosphoglycerate mutase family. BPG-dependent PGAM subfamily.</text>
</comment>
<proteinExistence type="inferred from homology"/>
<organism>
    <name type="scientific">Pectobacterium atrosepticum (strain SCRI 1043 / ATCC BAA-672)</name>
    <name type="common">Erwinia carotovora subsp. atroseptica</name>
    <dbReference type="NCBI Taxonomy" id="218491"/>
    <lineage>
        <taxon>Bacteria</taxon>
        <taxon>Pseudomonadati</taxon>
        <taxon>Pseudomonadota</taxon>
        <taxon>Gammaproteobacteria</taxon>
        <taxon>Enterobacterales</taxon>
        <taxon>Pectobacteriaceae</taxon>
        <taxon>Pectobacterium</taxon>
    </lineage>
</organism>
<evidence type="ECO:0000255" key="1">
    <source>
        <dbReference type="HAMAP-Rule" id="MF_01039"/>
    </source>
</evidence>
<feature type="chain" id="PRO_0000229120" description="2,3-bisphosphoglycerate-dependent phosphoglycerate mutase">
    <location>
        <begin position="1"/>
        <end position="250"/>
    </location>
</feature>
<feature type="active site" description="Tele-phosphohistidine intermediate" evidence="1">
    <location>
        <position position="11"/>
    </location>
</feature>
<feature type="active site" description="Proton donor/acceptor" evidence="1">
    <location>
        <position position="89"/>
    </location>
</feature>
<feature type="binding site" evidence="1">
    <location>
        <begin position="10"/>
        <end position="17"/>
    </location>
    <ligand>
        <name>substrate</name>
    </ligand>
</feature>
<feature type="binding site" evidence="1">
    <location>
        <begin position="23"/>
        <end position="24"/>
    </location>
    <ligand>
        <name>substrate</name>
    </ligand>
</feature>
<feature type="binding site" evidence="1">
    <location>
        <position position="62"/>
    </location>
    <ligand>
        <name>substrate</name>
    </ligand>
</feature>
<feature type="binding site" evidence="1">
    <location>
        <begin position="89"/>
        <end position="92"/>
    </location>
    <ligand>
        <name>substrate</name>
    </ligand>
</feature>
<feature type="binding site" evidence="1">
    <location>
        <position position="100"/>
    </location>
    <ligand>
        <name>substrate</name>
    </ligand>
</feature>
<feature type="binding site" evidence="1">
    <location>
        <begin position="116"/>
        <end position="117"/>
    </location>
    <ligand>
        <name>substrate</name>
    </ligand>
</feature>
<feature type="binding site" evidence="1">
    <location>
        <begin position="185"/>
        <end position="186"/>
    </location>
    <ligand>
        <name>substrate</name>
    </ligand>
</feature>
<feature type="site" description="Transition state stabilizer" evidence="1">
    <location>
        <position position="184"/>
    </location>
</feature>
<keyword id="KW-0312">Gluconeogenesis</keyword>
<keyword id="KW-0324">Glycolysis</keyword>
<keyword id="KW-0413">Isomerase</keyword>
<keyword id="KW-1185">Reference proteome</keyword>
<gene>
    <name evidence="1" type="primary">gpmA</name>
    <name type="ordered locus">ECA1382</name>
</gene>
<protein>
    <recommendedName>
        <fullName evidence="1">2,3-bisphosphoglycerate-dependent phosphoglycerate mutase</fullName>
        <shortName evidence="1">BPG-dependent PGAM</shortName>
        <shortName evidence="1">PGAM</shortName>
        <shortName evidence="1">Phosphoglyceromutase</shortName>
        <shortName evidence="1">dPGM</shortName>
        <ecNumber evidence="1">5.4.2.11</ecNumber>
    </recommendedName>
</protein>
<reference key="1">
    <citation type="journal article" date="2004" name="Proc. Natl. Acad. Sci. U.S.A.">
        <title>Genome sequence of the enterobacterial phytopathogen Erwinia carotovora subsp. atroseptica and characterization of virulence factors.</title>
        <authorList>
            <person name="Bell K.S."/>
            <person name="Sebaihia M."/>
            <person name="Pritchard L."/>
            <person name="Holden M.T.G."/>
            <person name="Hyman L.J."/>
            <person name="Holeva M.C."/>
            <person name="Thomson N.R."/>
            <person name="Bentley S.D."/>
            <person name="Churcher L.J.C."/>
            <person name="Mungall K."/>
            <person name="Atkin R."/>
            <person name="Bason N."/>
            <person name="Brooks K."/>
            <person name="Chillingworth T."/>
            <person name="Clark K."/>
            <person name="Doggett J."/>
            <person name="Fraser A."/>
            <person name="Hance Z."/>
            <person name="Hauser H."/>
            <person name="Jagels K."/>
            <person name="Moule S."/>
            <person name="Norbertczak H."/>
            <person name="Ormond D."/>
            <person name="Price C."/>
            <person name="Quail M.A."/>
            <person name="Sanders M."/>
            <person name="Walker D."/>
            <person name="Whitehead S."/>
            <person name="Salmond G.P.C."/>
            <person name="Birch P.R.J."/>
            <person name="Parkhill J."/>
            <person name="Toth I.K."/>
        </authorList>
    </citation>
    <scope>NUCLEOTIDE SEQUENCE [LARGE SCALE GENOMIC DNA]</scope>
    <source>
        <strain>SCRI 1043 / ATCC BAA-672</strain>
    </source>
</reference>
<accession>Q6D7E3</accession>
<name>GPMA_PECAS</name>
<dbReference type="EC" id="5.4.2.11" evidence="1"/>
<dbReference type="EMBL" id="BX950851">
    <property type="protein sequence ID" value="CAG74292.1"/>
    <property type="molecule type" value="Genomic_DNA"/>
</dbReference>
<dbReference type="RefSeq" id="WP_011092967.1">
    <property type="nucleotide sequence ID" value="NC_004547.2"/>
</dbReference>
<dbReference type="SMR" id="Q6D7E3"/>
<dbReference type="STRING" id="218491.ECA1382"/>
<dbReference type="GeneID" id="57208197"/>
<dbReference type="KEGG" id="eca:ECA1382"/>
<dbReference type="PATRIC" id="fig|218491.5.peg.1416"/>
<dbReference type="eggNOG" id="COG0588">
    <property type="taxonomic scope" value="Bacteria"/>
</dbReference>
<dbReference type="HOGENOM" id="CLU_033323_1_1_6"/>
<dbReference type="OrthoDB" id="9781415at2"/>
<dbReference type="UniPathway" id="UPA00109">
    <property type="reaction ID" value="UER00186"/>
</dbReference>
<dbReference type="Proteomes" id="UP000007966">
    <property type="component" value="Chromosome"/>
</dbReference>
<dbReference type="GO" id="GO:0004619">
    <property type="term" value="F:phosphoglycerate mutase activity"/>
    <property type="evidence" value="ECO:0007669"/>
    <property type="project" value="UniProtKB-EC"/>
</dbReference>
<dbReference type="GO" id="GO:0006094">
    <property type="term" value="P:gluconeogenesis"/>
    <property type="evidence" value="ECO:0007669"/>
    <property type="project" value="UniProtKB-UniRule"/>
</dbReference>
<dbReference type="GO" id="GO:0006096">
    <property type="term" value="P:glycolytic process"/>
    <property type="evidence" value="ECO:0007669"/>
    <property type="project" value="UniProtKB-UniRule"/>
</dbReference>
<dbReference type="CDD" id="cd07067">
    <property type="entry name" value="HP_PGM_like"/>
    <property type="match status" value="1"/>
</dbReference>
<dbReference type="FunFam" id="3.40.50.1240:FF:000003">
    <property type="entry name" value="2,3-bisphosphoglycerate-dependent phosphoglycerate mutase"/>
    <property type="match status" value="1"/>
</dbReference>
<dbReference type="Gene3D" id="3.40.50.1240">
    <property type="entry name" value="Phosphoglycerate mutase-like"/>
    <property type="match status" value="1"/>
</dbReference>
<dbReference type="HAMAP" id="MF_01039">
    <property type="entry name" value="PGAM_GpmA"/>
    <property type="match status" value="1"/>
</dbReference>
<dbReference type="InterPro" id="IPR013078">
    <property type="entry name" value="His_Pase_superF_clade-1"/>
</dbReference>
<dbReference type="InterPro" id="IPR029033">
    <property type="entry name" value="His_PPase_superfam"/>
</dbReference>
<dbReference type="InterPro" id="IPR001345">
    <property type="entry name" value="PG/BPGM_mutase_AS"/>
</dbReference>
<dbReference type="InterPro" id="IPR005952">
    <property type="entry name" value="Phosphogly_mut1"/>
</dbReference>
<dbReference type="NCBIfam" id="TIGR01258">
    <property type="entry name" value="pgm_1"/>
    <property type="match status" value="1"/>
</dbReference>
<dbReference type="NCBIfam" id="NF010713">
    <property type="entry name" value="PRK14115.1"/>
    <property type="match status" value="1"/>
</dbReference>
<dbReference type="PANTHER" id="PTHR11931">
    <property type="entry name" value="PHOSPHOGLYCERATE MUTASE"/>
    <property type="match status" value="1"/>
</dbReference>
<dbReference type="Pfam" id="PF00300">
    <property type="entry name" value="His_Phos_1"/>
    <property type="match status" value="2"/>
</dbReference>
<dbReference type="PIRSF" id="PIRSF000709">
    <property type="entry name" value="6PFK_2-Ptase"/>
    <property type="match status" value="1"/>
</dbReference>
<dbReference type="SMART" id="SM00855">
    <property type="entry name" value="PGAM"/>
    <property type="match status" value="1"/>
</dbReference>
<dbReference type="SUPFAM" id="SSF53254">
    <property type="entry name" value="Phosphoglycerate mutase-like"/>
    <property type="match status" value="1"/>
</dbReference>
<dbReference type="PROSITE" id="PS00175">
    <property type="entry name" value="PG_MUTASE"/>
    <property type="match status" value="1"/>
</dbReference>
<sequence>MAVTKLVLVRHGESQWNNENRFTGWYDVDLSEKGRSEAKAAGQLLKDEGFAFDFAYTSVLKRAIHTLWSVLDELDQAWLPVEKSWKLNERHYGALQGLNKAETAEKYGDEQVKQWRRGFAITPPELTRDDERFPGHDPRYASLSDKELPQTESLALTIERVVPYWTETILPRIKSGERVIVAAHGNSLRALVKYLDNMGEDEILELNIPTGVPLVYEFDENFKPIKRYYLGNADEIAAKAAAVANQGKAK</sequence>